<protein>
    <recommendedName>
        <fullName evidence="1">Small ribosomal subunit protein uS4</fullName>
    </recommendedName>
    <alternativeName>
        <fullName evidence="3">30S ribosomal protein S4</fullName>
    </alternativeName>
</protein>
<sequence length="205" mass="23806">MSKRETTKYKIDRRMGENIWGRPKSPVNRRDYGPGQHGQRRKGKLSDYGVQLRAKQKLKGFYGDISEKQFRKTYEEAARRRGDTGENLIGLLESRLDAVIYRAKFVPTIFASRQFINHGHVNVNGRRTNIQSYRCKPGDVIEVREKSKQLVLVLESVQLAERDVPEYIEADHNQMKATFVRIPAFADVPYAVQMEPNLVVEFYSR</sequence>
<dbReference type="EMBL" id="BX897700">
    <property type="protein sequence ID" value="CAF26110.1"/>
    <property type="molecule type" value="Genomic_DNA"/>
</dbReference>
<dbReference type="RefSeq" id="WP_011179373.1">
    <property type="nucleotide sequence ID" value="NC_005955.1"/>
</dbReference>
<dbReference type="SMR" id="Q6FZU4"/>
<dbReference type="GeneID" id="56533021"/>
<dbReference type="KEGG" id="bqu:BQ06190"/>
<dbReference type="eggNOG" id="COG0522">
    <property type="taxonomic scope" value="Bacteria"/>
</dbReference>
<dbReference type="HOGENOM" id="CLU_092403_0_0_5"/>
<dbReference type="OrthoDB" id="9803672at2"/>
<dbReference type="Proteomes" id="UP000000597">
    <property type="component" value="Chromosome"/>
</dbReference>
<dbReference type="GO" id="GO:0015935">
    <property type="term" value="C:small ribosomal subunit"/>
    <property type="evidence" value="ECO:0007669"/>
    <property type="project" value="InterPro"/>
</dbReference>
<dbReference type="GO" id="GO:0019843">
    <property type="term" value="F:rRNA binding"/>
    <property type="evidence" value="ECO:0007669"/>
    <property type="project" value="UniProtKB-UniRule"/>
</dbReference>
<dbReference type="GO" id="GO:0003735">
    <property type="term" value="F:structural constituent of ribosome"/>
    <property type="evidence" value="ECO:0007669"/>
    <property type="project" value="InterPro"/>
</dbReference>
<dbReference type="GO" id="GO:0042274">
    <property type="term" value="P:ribosomal small subunit biogenesis"/>
    <property type="evidence" value="ECO:0007669"/>
    <property type="project" value="TreeGrafter"/>
</dbReference>
<dbReference type="GO" id="GO:0006412">
    <property type="term" value="P:translation"/>
    <property type="evidence" value="ECO:0007669"/>
    <property type="project" value="UniProtKB-UniRule"/>
</dbReference>
<dbReference type="CDD" id="cd00165">
    <property type="entry name" value="S4"/>
    <property type="match status" value="1"/>
</dbReference>
<dbReference type="FunFam" id="3.10.290.10:FF:000001">
    <property type="entry name" value="30S ribosomal protein S4"/>
    <property type="match status" value="1"/>
</dbReference>
<dbReference type="Gene3D" id="1.10.1050.10">
    <property type="entry name" value="Ribosomal Protein S4 Delta 41, Chain A, domain 1"/>
    <property type="match status" value="1"/>
</dbReference>
<dbReference type="Gene3D" id="3.10.290.10">
    <property type="entry name" value="RNA-binding S4 domain"/>
    <property type="match status" value="1"/>
</dbReference>
<dbReference type="HAMAP" id="MF_01306_B">
    <property type="entry name" value="Ribosomal_uS4_B"/>
    <property type="match status" value="1"/>
</dbReference>
<dbReference type="InterPro" id="IPR022801">
    <property type="entry name" value="Ribosomal_uS4"/>
</dbReference>
<dbReference type="InterPro" id="IPR005709">
    <property type="entry name" value="Ribosomal_uS4_bac-type"/>
</dbReference>
<dbReference type="InterPro" id="IPR018079">
    <property type="entry name" value="Ribosomal_uS4_CS"/>
</dbReference>
<dbReference type="InterPro" id="IPR001912">
    <property type="entry name" value="Ribosomal_uS4_N"/>
</dbReference>
<dbReference type="InterPro" id="IPR002942">
    <property type="entry name" value="S4_RNA-bd"/>
</dbReference>
<dbReference type="InterPro" id="IPR036986">
    <property type="entry name" value="S4_RNA-bd_sf"/>
</dbReference>
<dbReference type="NCBIfam" id="NF003717">
    <property type="entry name" value="PRK05327.1"/>
    <property type="match status" value="1"/>
</dbReference>
<dbReference type="NCBIfam" id="TIGR01017">
    <property type="entry name" value="rpsD_bact"/>
    <property type="match status" value="1"/>
</dbReference>
<dbReference type="PANTHER" id="PTHR11831">
    <property type="entry name" value="30S 40S RIBOSOMAL PROTEIN"/>
    <property type="match status" value="1"/>
</dbReference>
<dbReference type="PANTHER" id="PTHR11831:SF4">
    <property type="entry name" value="SMALL RIBOSOMAL SUBUNIT PROTEIN US4M"/>
    <property type="match status" value="1"/>
</dbReference>
<dbReference type="Pfam" id="PF00163">
    <property type="entry name" value="Ribosomal_S4"/>
    <property type="match status" value="1"/>
</dbReference>
<dbReference type="Pfam" id="PF01479">
    <property type="entry name" value="S4"/>
    <property type="match status" value="1"/>
</dbReference>
<dbReference type="SMART" id="SM01390">
    <property type="entry name" value="Ribosomal_S4"/>
    <property type="match status" value="1"/>
</dbReference>
<dbReference type="SMART" id="SM00363">
    <property type="entry name" value="S4"/>
    <property type="match status" value="1"/>
</dbReference>
<dbReference type="SUPFAM" id="SSF55174">
    <property type="entry name" value="Alpha-L RNA-binding motif"/>
    <property type="match status" value="1"/>
</dbReference>
<dbReference type="PROSITE" id="PS00632">
    <property type="entry name" value="RIBOSOMAL_S4"/>
    <property type="match status" value="1"/>
</dbReference>
<dbReference type="PROSITE" id="PS50889">
    <property type="entry name" value="S4"/>
    <property type="match status" value="1"/>
</dbReference>
<keyword id="KW-0687">Ribonucleoprotein</keyword>
<keyword id="KW-0689">Ribosomal protein</keyword>
<keyword id="KW-0694">RNA-binding</keyword>
<keyword id="KW-0699">rRNA-binding</keyword>
<comment type="function">
    <text evidence="1">One of the primary rRNA binding proteins, it binds directly to 16S rRNA where it nucleates assembly of the body of the 30S subunit.</text>
</comment>
<comment type="function">
    <text evidence="1">With S5 and S12 plays an important role in translational accuracy.</text>
</comment>
<comment type="subunit">
    <text evidence="1">Part of the 30S ribosomal subunit. Contacts protein S5. The interaction surface between S4 and S5 is involved in control of translational fidelity.</text>
</comment>
<comment type="similarity">
    <text evidence="1">Belongs to the universal ribosomal protein uS4 family.</text>
</comment>
<evidence type="ECO:0000255" key="1">
    <source>
        <dbReference type="HAMAP-Rule" id="MF_01306"/>
    </source>
</evidence>
<evidence type="ECO:0000256" key="2">
    <source>
        <dbReference type="SAM" id="MobiDB-lite"/>
    </source>
</evidence>
<evidence type="ECO:0000305" key="3"/>
<name>RS4_BARQU</name>
<accession>Q6FZU4</accession>
<proteinExistence type="inferred from homology"/>
<reference key="1">
    <citation type="journal article" date="2004" name="Proc. Natl. Acad. Sci. U.S.A.">
        <title>The louse-borne human pathogen Bartonella quintana is a genomic derivative of the zoonotic agent Bartonella henselae.</title>
        <authorList>
            <person name="Alsmark U.C.M."/>
            <person name="Frank A.C."/>
            <person name="Karlberg E.O."/>
            <person name="Legault B.-A."/>
            <person name="Ardell D.H."/>
            <person name="Canbaeck B."/>
            <person name="Eriksson A.-S."/>
            <person name="Naeslund A.K."/>
            <person name="Handley S.A."/>
            <person name="Huvet M."/>
            <person name="La Scola B."/>
            <person name="Holmberg M."/>
            <person name="Andersson S.G.E."/>
        </authorList>
    </citation>
    <scope>NUCLEOTIDE SEQUENCE [LARGE SCALE GENOMIC DNA]</scope>
    <source>
        <strain>Toulouse</strain>
    </source>
</reference>
<feature type="chain" id="PRO_0000132342" description="Small ribosomal subunit protein uS4">
    <location>
        <begin position="1"/>
        <end position="205"/>
    </location>
</feature>
<feature type="domain" description="S4 RNA-binding" evidence="1">
    <location>
        <begin position="94"/>
        <end position="157"/>
    </location>
</feature>
<feature type="region of interest" description="Disordered" evidence="2">
    <location>
        <begin position="1"/>
        <end position="46"/>
    </location>
</feature>
<feature type="compositionally biased region" description="Basic and acidic residues" evidence="2">
    <location>
        <begin position="1"/>
        <end position="16"/>
    </location>
</feature>
<gene>
    <name evidence="1" type="primary">rpsD</name>
    <name type="ordered locus">BQ06190</name>
</gene>
<organism>
    <name type="scientific">Bartonella quintana (strain Toulouse)</name>
    <name type="common">Rochalimaea quintana</name>
    <dbReference type="NCBI Taxonomy" id="283165"/>
    <lineage>
        <taxon>Bacteria</taxon>
        <taxon>Pseudomonadati</taxon>
        <taxon>Pseudomonadota</taxon>
        <taxon>Alphaproteobacteria</taxon>
        <taxon>Hyphomicrobiales</taxon>
        <taxon>Bartonellaceae</taxon>
        <taxon>Bartonella</taxon>
    </lineage>
</organism>